<organism>
    <name type="scientific">Schizosaccharomyces pombe (strain 972 / ATCC 24843)</name>
    <name type="common">Fission yeast</name>
    <dbReference type="NCBI Taxonomy" id="284812"/>
    <lineage>
        <taxon>Eukaryota</taxon>
        <taxon>Fungi</taxon>
        <taxon>Dikarya</taxon>
        <taxon>Ascomycota</taxon>
        <taxon>Taphrinomycotina</taxon>
        <taxon>Schizosaccharomycetes</taxon>
        <taxon>Schizosaccharomycetales</taxon>
        <taxon>Schizosaccharomycetaceae</taxon>
        <taxon>Schizosaccharomyces</taxon>
    </lineage>
</organism>
<reference key="1">
    <citation type="journal article" date="2002" name="Nature">
        <title>The genome sequence of Schizosaccharomyces pombe.</title>
        <authorList>
            <person name="Wood V."/>
            <person name="Gwilliam R."/>
            <person name="Rajandream M.A."/>
            <person name="Lyne M.H."/>
            <person name="Lyne R."/>
            <person name="Stewart A."/>
            <person name="Sgouros J.G."/>
            <person name="Peat N."/>
            <person name="Hayles J."/>
            <person name="Baker S.G."/>
            <person name="Basham D."/>
            <person name="Bowman S."/>
            <person name="Brooks K."/>
            <person name="Brown D."/>
            <person name="Brown S."/>
            <person name="Chillingworth T."/>
            <person name="Churcher C.M."/>
            <person name="Collins M."/>
            <person name="Connor R."/>
            <person name="Cronin A."/>
            <person name="Davis P."/>
            <person name="Feltwell T."/>
            <person name="Fraser A."/>
            <person name="Gentles S."/>
            <person name="Goble A."/>
            <person name="Hamlin N."/>
            <person name="Harris D.E."/>
            <person name="Hidalgo J."/>
            <person name="Hodgson G."/>
            <person name="Holroyd S."/>
            <person name="Hornsby T."/>
            <person name="Howarth S."/>
            <person name="Huckle E.J."/>
            <person name="Hunt S."/>
            <person name="Jagels K."/>
            <person name="James K.D."/>
            <person name="Jones L."/>
            <person name="Jones M."/>
            <person name="Leather S."/>
            <person name="McDonald S."/>
            <person name="McLean J."/>
            <person name="Mooney P."/>
            <person name="Moule S."/>
            <person name="Mungall K.L."/>
            <person name="Murphy L.D."/>
            <person name="Niblett D."/>
            <person name="Odell C."/>
            <person name="Oliver K."/>
            <person name="O'Neil S."/>
            <person name="Pearson D."/>
            <person name="Quail M.A."/>
            <person name="Rabbinowitsch E."/>
            <person name="Rutherford K.M."/>
            <person name="Rutter S."/>
            <person name="Saunders D."/>
            <person name="Seeger K."/>
            <person name="Sharp S."/>
            <person name="Skelton J."/>
            <person name="Simmonds M.N."/>
            <person name="Squares R."/>
            <person name="Squares S."/>
            <person name="Stevens K."/>
            <person name="Taylor K."/>
            <person name="Taylor R.G."/>
            <person name="Tivey A."/>
            <person name="Walsh S.V."/>
            <person name="Warren T."/>
            <person name="Whitehead S."/>
            <person name="Woodward J.R."/>
            <person name="Volckaert G."/>
            <person name="Aert R."/>
            <person name="Robben J."/>
            <person name="Grymonprez B."/>
            <person name="Weltjens I."/>
            <person name="Vanstreels E."/>
            <person name="Rieger M."/>
            <person name="Schaefer M."/>
            <person name="Mueller-Auer S."/>
            <person name="Gabel C."/>
            <person name="Fuchs M."/>
            <person name="Duesterhoeft A."/>
            <person name="Fritzc C."/>
            <person name="Holzer E."/>
            <person name="Moestl D."/>
            <person name="Hilbert H."/>
            <person name="Borzym K."/>
            <person name="Langer I."/>
            <person name="Beck A."/>
            <person name="Lehrach H."/>
            <person name="Reinhardt R."/>
            <person name="Pohl T.M."/>
            <person name="Eger P."/>
            <person name="Zimmermann W."/>
            <person name="Wedler H."/>
            <person name="Wambutt R."/>
            <person name="Purnelle B."/>
            <person name="Goffeau A."/>
            <person name="Cadieu E."/>
            <person name="Dreano S."/>
            <person name="Gloux S."/>
            <person name="Lelaure V."/>
            <person name="Mottier S."/>
            <person name="Galibert F."/>
            <person name="Aves S.J."/>
            <person name="Xiang Z."/>
            <person name="Hunt C."/>
            <person name="Moore K."/>
            <person name="Hurst S.M."/>
            <person name="Lucas M."/>
            <person name="Rochet M."/>
            <person name="Gaillardin C."/>
            <person name="Tallada V.A."/>
            <person name="Garzon A."/>
            <person name="Thode G."/>
            <person name="Daga R.R."/>
            <person name="Cruzado L."/>
            <person name="Jimenez J."/>
            <person name="Sanchez M."/>
            <person name="del Rey F."/>
            <person name="Benito J."/>
            <person name="Dominguez A."/>
            <person name="Revuelta J.L."/>
            <person name="Moreno S."/>
            <person name="Armstrong J."/>
            <person name="Forsburg S.L."/>
            <person name="Cerutti L."/>
            <person name="Lowe T."/>
            <person name="McCombie W.R."/>
            <person name="Paulsen I."/>
            <person name="Potashkin J."/>
            <person name="Shpakovski G.V."/>
            <person name="Ussery D."/>
            <person name="Barrell B.G."/>
            <person name="Nurse P."/>
        </authorList>
    </citation>
    <scope>NUCLEOTIDE SEQUENCE [LARGE SCALE GENOMIC DNA]</scope>
    <source>
        <strain>972 / ATCC 24843</strain>
    </source>
</reference>
<reference key="2">
    <citation type="journal article" date="2008" name="J. Proteome Res.">
        <title>Phosphoproteome analysis of fission yeast.</title>
        <authorList>
            <person name="Wilson-Grady J.T."/>
            <person name="Villen J."/>
            <person name="Gygi S.P."/>
        </authorList>
    </citation>
    <scope>PHOSPHORYLATION [LARGE SCALE ANALYSIS] AT SER-15</scope>
    <scope>IDENTIFICATION BY MASS SPECTROMETRY</scope>
</reference>
<feature type="chain" id="PRO_0000123824" description="Vacuolar protein sorting-associated protein 74">
    <location>
        <begin position="1"/>
        <end position="337"/>
    </location>
</feature>
<feature type="region of interest" description="Disordered" evidence="2">
    <location>
        <begin position="1"/>
        <end position="43"/>
    </location>
</feature>
<feature type="compositionally biased region" description="Basic residues" evidence="2">
    <location>
        <begin position="1"/>
        <end position="10"/>
    </location>
</feature>
<feature type="compositionally biased region" description="Basic and acidic residues" evidence="2">
    <location>
        <begin position="16"/>
        <end position="43"/>
    </location>
</feature>
<feature type="binding site" evidence="1">
    <location>
        <position position="81"/>
    </location>
    <ligand>
        <name>a 1,2-diacyl-sn-glycero-3-phospho-(1D-myo-inositol 4-phosphate)</name>
        <dbReference type="ChEBI" id="CHEBI:58178"/>
    </ligand>
</feature>
<feature type="binding site" evidence="1">
    <location>
        <position position="90"/>
    </location>
    <ligand>
        <name>a 1,2-diacyl-sn-glycero-3-phospho-(1D-myo-inositol 4-phosphate)</name>
        <dbReference type="ChEBI" id="CHEBI:58178"/>
    </ligand>
</feature>
<feature type="binding site" evidence="1">
    <location>
        <position position="171"/>
    </location>
    <ligand>
        <name>a 1,2-diacyl-sn-glycero-3-phospho-(1D-myo-inositol 4-phosphate)</name>
        <dbReference type="ChEBI" id="CHEBI:58178"/>
    </ligand>
</feature>
<feature type="binding site" evidence="1">
    <location>
        <position position="174"/>
    </location>
    <ligand>
        <name>a 1,2-diacyl-sn-glycero-3-phospho-(1D-myo-inositol 4-phosphate)</name>
        <dbReference type="ChEBI" id="CHEBI:58178"/>
    </ligand>
</feature>
<feature type="modified residue" description="Phosphoserine" evidence="3">
    <location>
        <position position="15"/>
    </location>
</feature>
<accession>O14205</accession>
<accession>Q9P7C4</accession>
<gene>
    <name type="primary">vps74</name>
    <name type="ORF">SPAC5D6.13</name>
    <name type="ORF">SPAPJ735.02c</name>
</gene>
<name>VPS74_SCHPO</name>
<evidence type="ECO:0000250" key="1"/>
<evidence type="ECO:0000256" key="2">
    <source>
        <dbReference type="SAM" id="MobiDB-lite"/>
    </source>
</evidence>
<evidence type="ECO:0000269" key="3">
    <source>
    </source>
</evidence>
<evidence type="ECO:0000305" key="4"/>
<protein>
    <recommendedName>
        <fullName>Vacuolar protein sorting-associated protein 74</fullName>
    </recommendedName>
</protein>
<proteinExistence type="evidence at protein level"/>
<comment type="function">
    <text evidence="1">Phosphatidylinositol-4-phosphate-binding protein that links Golgi membranes to the cytoskeleton and may participate in the tensile force required for vesicle budding from the Golgi. Thereby, may play a role in Golgi membrane trafficking and could indirectly give its flattened shape to the Golgi apparatus. May also bind to the coatomer to regulate Golgi membrane trafficking. May play a role in anterograde transport from the Golgi to the plasma membrane and regulate secretion. Mediates the cis and medial Golgi localization of mannosyltransferases through direct binding of their cytosolic domains. Involved in vacuolar protein sorting (By similarity).</text>
</comment>
<comment type="subunit">
    <text evidence="1">Homotetramer.</text>
</comment>
<comment type="subcellular location">
    <subcellularLocation>
        <location evidence="1">Golgi apparatus</location>
        <location evidence="1">Golgi stack membrane</location>
        <topology evidence="1">Peripheral membrane protein</topology>
        <orientation evidence="1">Cytoplasmic side</orientation>
    </subcellularLocation>
    <text evidence="1">Phosphatidylinositol 4-phosphate-binding and oligomerization participate in the recruitment onto Golgi membranes.</text>
</comment>
<comment type="similarity">
    <text evidence="4">Belongs to the GOLPH3/VPS74 family.</text>
</comment>
<dbReference type="EMBL" id="CU329670">
    <property type="protein sequence ID" value="CAB86263.2"/>
    <property type="molecule type" value="Genomic_DNA"/>
</dbReference>
<dbReference type="RefSeq" id="XP_001713053.1">
    <property type="nucleotide sequence ID" value="XM_001713001.2"/>
</dbReference>
<dbReference type="SMR" id="O14205"/>
<dbReference type="BioGRID" id="280620">
    <property type="interactions" value="1"/>
</dbReference>
<dbReference type="FunCoup" id="O14205">
    <property type="interactions" value="196"/>
</dbReference>
<dbReference type="STRING" id="284812.O14205"/>
<dbReference type="iPTMnet" id="O14205"/>
<dbReference type="PaxDb" id="4896-SPAC5D6.13.1"/>
<dbReference type="EnsemblFungi" id="SPAC5D6.13.1">
    <property type="protein sequence ID" value="SPAC5D6.13.1:pep"/>
    <property type="gene ID" value="SPAC5D6.13"/>
</dbReference>
<dbReference type="PomBase" id="SPAC5D6.13">
    <property type="gene designation" value="vps74"/>
</dbReference>
<dbReference type="VEuPathDB" id="FungiDB:SPAC5D6.13"/>
<dbReference type="eggNOG" id="KOG3983">
    <property type="taxonomic scope" value="Eukaryota"/>
</dbReference>
<dbReference type="HOGENOM" id="CLU_036311_1_1_1"/>
<dbReference type="InParanoid" id="O14205"/>
<dbReference type="OMA" id="GETWNLL"/>
<dbReference type="PhylomeDB" id="O14205"/>
<dbReference type="PRO" id="PR:O14205"/>
<dbReference type="Proteomes" id="UP000002485">
    <property type="component" value="Chromosome I"/>
</dbReference>
<dbReference type="GO" id="GO:0005829">
    <property type="term" value="C:cytosol"/>
    <property type="evidence" value="ECO:0000314"/>
    <property type="project" value="PomBase"/>
</dbReference>
<dbReference type="GO" id="GO:0005794">
    <property type="term" value="C:Golgi apparatus"/>
    <property type="evidence" value="ECO:0000314"/>
    <property type="project" value="PomBase"/>
</dbReference>
<dbReference type="GO" id="GO:0031985">
    <property type="term" value="C:Golgi cisterna"/>
    <property type="evidence" value="ECO:0000318"/>
    <property type="project" value="GO_Central"/>
</dbReference>
<dbReference type="GO" id="GO:0032580">
    <property type="term" value="C:Golgi cisterna membrane"/>
    <property type="evidence" value="ECO:0007669"/>
    <property type="project" value="UniProtKB-SubCell"/>
</dbReference>
<dbReference type="GO" id="GO:0000139">
    <property type="term" value="C:Golgi membrane"/>
    <property type="evidence" value="ECO:0007669"/>
    <property type="project" value="GOC"/>
</dbReference>
<dbReference type="GO" id="GO:0005634">
    <property type="term" value="C:nucleus"/>
    <property type="evidence" value="ECO:0007005"/>
    <property type="project" value="PomBase"/>
</dbReference>
<dbReference type="GO" id="GO:0005802">
    <property type="term" value="C:trans-Golgi network"/>
    <property type="evidence" value="ECO:0000318"/>
    <property type="project" value="GO_Central"/>
</dbReference>
<dbReference type="GO" id="GO:0070273">
    <property type="term" value="F:phosphatidylinositol-4-phosphate binding"/>
    <property type="evidence" value="ECO:0000318"/>
    <property type="project" value="GO_Central"/>
</dbReference>
<dbReference type="GO" id="GO:0030968">
    <property type="term" value="P:endoplasmic reticulum unfolded protein response"/>
    <property type="evidence" value="ECO:0000266"/>
    <property type="project" value="PomBase"/>
</dbReference>
<dbReference type="GO" id="GO:0007030">
    <property type="term" value="P:Golgi organization"/>
    <property type="evidence" value="ECO:0000318"/>
    <property type="project" value="GO_Central"/>
</dbReference>
<dbReference type="GO" id="GO:0043001">
    <property type="term" value="P:Golgi to plasma membrane protein transport"/>
    <property type="evidence" value="ECO:0000318"/>
    <property type="project" value="GO_Central"/>
</dbReference>
<dbReference type="GO" id="GO:0048194">
    <property type="term" value="P:Golgi vesicle budding"/>
    <property type="evidence" value="ECO:0000318"/>
    <property type="project" value="GO_Central"/>
</dbReference>
<dbReference type="GO" id="GO:0034067">
    <property type="term" value="P:protein localization to Golgi apparatus"/>
    <property type="evidence" value="ECO:0000315"/>
    <property type="project" value="PomBase"/>
</dbReference>
<dbReference type="GO" id="GO:0006890">
    <property type="term" value="P:retrograde vesicle-mediated transport, Golgi to endoplasmic reticulum"/>
    <property type="evidence" value="ECO:0000318"/>
    <property type="project" value="GO_Central"/>
</dbReference>
<dbReference type="FunFam" id="1.10.3630.10:FF:000002">
    <property type="entry name" value="Vacuolar sorting-associated 74 protein"/>
    <property type="match status" value="1"/>
</dbReference>
<dbReference type="Gene3D" id="1.10.3630.10">
    <property type="entry name" value="yeast vps74-n-term truncation variant domain like"/>
    <property type="match status" value="1"/>
</dbReference>
<dbReference type="InterPro" id="IPR008628">
    <property type="entry name" value="GPP34-like"/>
</dbReference>
<dbReference type="InterPro" id="IPR038261">
    <property type="entry name" value="GPP34-like_sf"/>
</dbReference>
<dbReference type="PANTHER" id="PTHR12704:SF2">
    <property type="entry name" value="GOLGI PHOSPHOPROTEIN 3 HOMOLOG SAURON"/>
    <property type="match status" value="1"/>
</dbReference>
<dbReference type="PANTHER" id="PTHR12704">
    <property type="entry name" value="TRANS-GOLGI PROTEIN GMX33"/>
    <property type="match status" value="1"/>
</dbReference>
<dbReference type="Pfam" id="PF05719">
    <property type="entry name" value="GPP34"/>
    <property type="match status" value="1"/>
</dbReference>
<sequence>MSGGLSRRRVAAASSDEERPEMRSVSHSKSHLEGYDDDHKIAFDPKDLEQGAEREKQPRLTLMEEVLLLGLKDKQGYLSFWNDSISYSLRGCILMELAFRGKLRMQKDVNRKRFPLADRVVELVDEKLTGEVLLDEAIKMIHTSELMSVTSWIDLMSGETWNVMKIGYQLRQVRERLAKGLVDKGILRNEKKNFLLFDMPTHPIADTSIKDSIKKRVVSVLTSRVIEIDNSPSFPEYLSFRCLRTVALACSSYAANVLENALDNLNYEDREKAFSRVDELLCDFSQWPFDLHASSSVGANLPELISEELSSVKEEQLLFIEVVAAVLQVFTHLDSLL</sequence>
<keyword id="KW-0333">Golgi apparatus</keyword>
<keyword id="KW-0446">Lipid-binding</keyword>
<keyword id="KW-0472">Membrane</keyword>
<keyword id="KW-0597">Phosphoprotein</keyword>
<keyword id="KW-1185">Reference proteome</keyword>